<reference key="1">
    <citation type="journal article" date="1986" name="Cell">
        <title>Genetic basis of the complementary DpnI and DpnII restriction systems of S. pneumoniae: an intercellular cassette mechanism.</title>
        <authorList>
            <person name="Lacks S.A."/>
            <person name="Mannarelli B.M."/>
            <person name="Springhorn S.S."/>
            <person name="Greenberg B."/>
        </authorList>
    </citation>
    <scope>NUCLEOTIDE SEQUENCE [GENOMIC DNA]</scope>
</reference>
<reference key="2">
    <citation type="journal article" date="1987" name="J. Mol. Biol.">
        <title>Proteins encoded by the DpnII restriction gene cassette. Two methylases and an endonuclease.</title>
        <authorList>
            <person name="de la Campa A.G."/>
            <person name="Purushottam K."/>
            <person name="Springhorn S.S."/>
            <person name="Lacks S.A."/>
        </authorList>
    </citation>
    <scope>PROTEIN SEQUENCE OF 1-11</scope>
    <scope>FUNCTION</scope>
    <scope>CATALYTIC ACTIVITY</scope>
    <scope>SUBUNIT</scope>
</reference>
<reference key="3">
    <citation type="journal article" date="2003" name="Nucleic Acids Res.">
        <title>A nomenclature for restriction enzymes, DNA methyltransferases, homing endonucleases and their genes.</title>
        <authorList>
            <person name="Roberts R.J."/>
            <person name="Belfort M."/>
            <person name="Bestor T."/>
            <person name="Bhagwat A.S."/>
            <person name="Bickle T.A."/>
            <person name="Bitinaite J."/>
            <person name="Blumenthal R.M."/>
            <person name="Degtyarev S.K."/>
            <person name="Dryden D.T."/>
            <person name="Dybvig K."/>
            <person name="Firman K."/>
            <person name="Gromova E.S."/>
            <person name="Gumport R.I."/>
            <person name="Halford S.E."/>
            <person name="Hattman S."/>
            <person name="Heitman J."/>
            <person name="Hornby D.P."/>
            <person name="Janulaitis A."/>
            <person name="Jeltsch A."/>
            <person name="Josephsen J."/>
            <person name="Kiss A."/>
            <person name="Klaenhammer T.R."/>
            <person name="Kobayashi I."/>
            <person name="Kong H."/>
            <person name="Krueger D.H."/>
            <person name="Lacks S."/>
            <person name="Marinus M.G."/>
            <person name="Miyahara M."/>
            <person name="Morgan R.D."/>
            <person name="Murray N.E."/>
            <person name="Nagaraja V."/>
            <person name="Piekarowicz A."/>
            <person name="Pingoud A."/>
            <person name="Raleigh E."/>
            <person name="Rao D.N."/>
            <person name="Reich N."/>
            <person name="Repin V.E."/>
            <person name="Selker E.U."/>
            <person name="Shaw P.C."/>
            <person name="Stein D.C."/>
            <person name="Stoddard B.L."/>
            <person name="Szybalski W."/>
            <person name="Trautner T.A."/>
            <person name="Van Etten J.L."/>
            <person name="Vitor J.M."/>
            <person name="Wilson G.G."/>
            <person name="Xu S.Y."/>
        </authorList>
    </citation>
    <scope>NOMENCLATURE</scope>
    <scope>SUBTYPE</scope>
</reference>
<feature type="chain" id="PRO_0000077302" description="Type II restriction enzyme DpnII">
    <location>
        <begin position="1"/>
        <end position="288"/>
    </location>
</feature>
<accession>P09357</accession>
<organism>
    <name type="scientific">Streptococcus pneumoniae</name>
    <dbReference type="NCBI Taxonomy" id="1313"/>
    <lineage>
        <taxon>Bacteria</taxon>
        <taxon>Bacillati</taxon>
        <taxon>Bacillota</taxon>
        <taxon>Bacilli</taxon>
        <taxon>Lactobacillales</taxon>
        <taxon>Streptococcaceae</taxon>
        <taxon>Streptococcus</taxon>
    </lineage>
</organism>
<dbReference type="EC" id="3.1.21.4" evidence="1"/>
<dbReference type="EMBL" id="M14339">
    <property type="protein sequence ID" value="AAA88582.1"/>
    <property type="molecule type" value="Genomic_DNA"/>
</dbReference>
<dbReference type="PIR" id="B24372">
    <property type="entry name" value="B24372"/>
</dbReference>
<dbReference type="RefSeq" id="WP_000815111.1">
    <property type="nucleotide sequence ID" value="NZ_WNIC01000007.1"/>
</dbReference>
<dbReference type="REBASE" id="777">
    <property type="entry name" value="DpnII"/>
</dbReference>
<dbReference type="OMA" id="NFYPLHS"/>
<dbReference type="PRO" id="PR:P09357"/>
<dbReference type="GO" id="GO:0003677">
    <property type="term" value="F:DNA binding"/>
    <property type="evidence" value="ECO:0007669"/>
    <property type="project" value="InterPro"/>
</dbReference>
<dbReference type="GO" id="GO:0009036">
    <property type="term" value="F:type II site-specific deoxyribonuclease activity"/>
    <property type="evidence" value="ECO:0007669"/>
    <property type="project" value="UniProtKB-EC"/>
</dbReference>
<dbReference type="GO" id="GO:0009307">
    <property type="term" value="P:DNA restriction-modification system"/>
    <property type="evidence" value="ECO:0007669"/>
    <property type="project" value="UniProtKB-KW"/>
</dbReference>
<dbReference type="InterPro" id="IPR021191">
    <property type="entry name" value="Restrct_endonuc_II_DpnII"/>
</dbReference>
<dbReference type="InterPro" id="IPR007637">
    <property type="entry name" value="Restrct_endonuc_II_DpnII-like"/>
</dbReference>
<dbReference type="Pfam" id="PF04556">
    <property type="entry name" value="DpnII"/>
    <property type="match status" value="1"/>
</dbReference>
<dbReference type="PIRSF" id="PIRSF016080">
    <property type="entry name" value="Restrict_endonuc_II_DpmII"/>
    <property type="match status" value="1"/>
</dbReference>
<protein>
    <recommendedName>
        <fullName evidence="2">Type II restriction enzyme DpnII</fullName>
        <shortName>R.DpnII</shortName>
        <ecNumber evidence="1">3.1.21.4</ecNumber>
    </recommendedName>
    <alternativeName>
        <fullName>Endonuclease DpnII</fullName>
    </alternativeName>
    <alternativeName>
        <fullName>Type-2 restriction enzyme DpnII</fullName>
    </alternativeName>
</protein>
<name>T2D2_STREE</name>
<proteinExistence type="evidence at protein level"/>
<keyword id="KW-0903">Direct protein sequencing</keyword>
<keyword id="KW-0255">Endonuclease</keyword>
<keyword id="KW-0378">Hydrolase</keyword>
<keyword id="KW-0540">Nuclease</keyword>
<keyword id="KW-0680">Restriction system</keyword>
<evidence type="ECO:0000269" key="1">
    <source>
    </source>
</evidence>
<evidence type="ECO:0000303" key="2">
    <source>
    </source>
</evidence>
<evidence type="ECO:0000303" key="3">
    <source>
    </source>
</evidence>
<evidence type="ECO:0000305" key="4"/>
<evidence type="ECO:0000305" key="5">
    <source>
    </source>
</evidence>
<comment type="function">
    <text evidence="1 2">A P subtype restriction enzyme that recognizes the double-stranded unmethylated sequence 5'-GATC-3' and cleaves before G-1.</text>
</comment>
<comment type="catalytic activity">
    <reaction evidence="1">
        <text>Endonucleolytic cleavage of DNA to give specific double-stranded fragments with terminal 5'-phosphates.</text>
        <dbReference type="EC" id="3.1.21.4"/>
    </reaction>
</comment>
<comment type="subunit">
    <text evidence="5">Homodimer.</text>
</comment>
<comment type="similarity">
    <text evidence="4">Belongs to the DpnII type II restriction endonuclease family.</text>
</comment>
<sequence length="288" mass="33585">MKQTRNFDEWLSTMTDTVADWTYYTDFPKVYKNVSSIKVALNIMNSLIGSKNIQEDFLDLYQNYPEILKVVPLLIAKRLRDTIIVKDPIKDFYFDFSKRNYSIEEYTMFLEKSGIFDLLQNHLVSNLVDYVTGVEVGMDTNGRKNRTGDAMENIVQSYLEAEGYILGENLFKEIEQNEIEEIFSVDLSAITNDGNTVKRFDFVIKNEQVLYLIEVNFYSGSGSKLNETARSYKMIAEETKAIPNVEFMWITDGQGWYKAKNNLRETFDILPFLYNINDLEHNILKNLK</sequence>
<gene>
    <name evidence="3" type="primary">dpnB</name>
</gene>